<gene>
    <name type="primary">OPG134</name>
    <name type="synonym">VITF3S</name>
    <name type="ORF">A8R</name>
</gene>
<comment type="function">
    <text evidence="1">Acts with RNA polymerase to initiate transcription from intermediate gene promoters.</text>
</comment>
<comment type="subunit">
    <text evidence="1">Heterodimer of a 45 kDa (A23R) and a 32 kDa (A8R) subunit to form the virus intermediate transcription factor (VITF)-3.</text>
</comment>
<comment type="induction">
    <text>Expressed in the early phase of the viral replicative cycle.</text>
</comment>
<comment type="similarity">
    <text evidence="2">Belongs to the orthopoxvirus OPG134 family.</text>
</comment>
<protein>
    <recommendedName>
        <fullName>Intermediate transcription factor 3 small subunit</fullName>
    </recommendedName>
    <alternativeName>
        <fullName>VITF-3 32 kDa subunit</fullName>
    </alternativeName>
    <alternativeName>
        <fullName>VITF-3 small subunit</fullName>
    </alternativeName>
</protein>
<organismHost>
    <name type="scientific">Homo sapiens</name>
    <name type="common">Human</name>
    <dbReference type="NCBI Taxonomy" id="9606"/>
</organismHost>
<dbReference type="EMBL" id="X69198">
    <property type="protein sequence ID" value="CAA49053.1"/>
    <property type="molecule type" value="Genomic_DNA"/>
</dbReference>
<dbReference type="EMBL" id="X67116">
    <property type="protein sequence ID" value="CAA47519.1"/>
    <property type="molecule type" value="Genomic_DNA"/>
</dbReference>
<dbReference type="PIR" id="I36848">
    <property type="entry name" value="I36848"/>
</dbReference>
<dbReference type="RefSeq" id="NP_042156.1">
    <property type="nucleotide sequence ID" value="NC_001611.1"/>
</dbReference>
<dbReference type="SMR" id="P0DSP9"/>
<dbReference type="GeneID" id="1486538"/>
<dbReference type="KEGG" id="vg:1486538"/>
<dbReference type="Proteomes" id="UP000002060">
    <property type="component" value="Segment"/>
</dbReference>
<dbReference type="InterPro" id="IPR006834">
    <property type="entry name" value="Pox_A8"/>
</dbReference>
<dbReference type="Pfam" id="PF04745">
    <property type="entry name" value="Pox_A8"/>
    <property type="match status" value="1"/>
</dbReference>
<proteinExistence type="evidence at transcript level"/>
<reference key="1">
    <citation type="journal article" date="1991" name="Dokl. Akad. Nauk SSSR">
        <title>Creation of a clone library of fragments from the natural variola virus and study of the structural and functional organization of viral genes from a circle of hosts.</title>
        <authorList>
            <person name="Shchelkunov S.N."/>
            <person name="Marennikova S.S."/>
            <person name="Totmenin A.V."/>
            <person name="Blinov V.M."/>
            <person name="Chizhikov V.E."/>
            <person name="Gutorov V.V."/>
            <person name="Safronov P.F."/>
            <person name="Pozdnyakov S.G."/>
            <person name="Shelukhina E.M."/>
            <person name="Gashnikov P.V."/>
            <person name="Anjaparidze O.G."/>
            <person name="Sandakhchiev L.S."/>
        </authorList>
    </citation>
    <scope>NUCLEOTIDE SEQUENCE [GENOMIC DNA]</scope>
</reference>
<reference key="2">
    <citation type="journal article" date="1993" name="FEBS Lett.">
        <title>Genes of variola and vaccinia viruses necessary to overcome the host protective mechanisms.</title>
        <authorList>
            <person name="Shchelkunov S.N."/>
            <person name="Blinov V.M."/>
            <person name="Sandakhchiev L.S."/>
        </authorList>
    </citation>
    <scope>NUCLEOTIDE SEQUENCE [LARGE SCALE GENOMIC DNA]</scope>
</reference>
<feature type="chain" id="PRO_0000099193" description="Intermediate transcription factor 3 small subunit">
    <location>
        <begin position="1"/>
        <end position="288"/>
    </location>
</feature>
<evidence type="ECO:0000250" key="1">
    <source>
        <dbReference type="UniProtKB" id="P68720"/>
    </source>
</evidence>
<evidence type="ECO:0000305" key="2"/>
<name>VTF3S_VAR67</name>
<accession>P0DSP9</accession>
<accession>P33834</accession>
<keyword id="KW-0010">Activator</keyword>
<keyword id="KW-0244">Early protein</keyword>
<keyword id="KW-1185">Reference proteome</keyword>
<keyword id="KW-0804">Transcription</keyword>
<keyword id="KW-0805">Transcription regulation</keyword>
<organism>
    <name type="scientific">Variola virus (isolate Human/India/Ind3/1967)</name>
    <name type="common">VARV</name>
    <name type="synonym">Smallpox virus</name>
    <dbReference type="NCBI Taxonomy" id="587200"/>
    <lineage>
        <taxon>Viruses</taxon>
        <taxon>Varidnaviria</taxon>
        <taxon>Bamfordvirae</taxon>
        <taxon>Nucleocytoviricota</taxon>
        <taxon>Pokkesviricetes</taxon>
        <taxon>Chitovirales</taxon>
        <taxon>Poxviridae</taxon>
        <taxon>Chordopoxvirinae</taxon>
        <taxon>Orthopoxvirus</taxon>
        <taxon>Variola virus</taxon>
    </lineage>
</organism>
<sequence length="288" mass="33554">MFEPVPDLNLEASVELGEVNIDQTTPMIKENIGFISRSRRLFAHRSKDDERKLALRFFLQRLYFLDHREIHYLFRCVDAVKDVTITKKNNIIVAPYIALLTIASKGCKLTETMIEAFFPELYNEHSKKFKFNSQVSIIQEKLGYQSGNYHVYDFEPYYSTVALAIRDEHSSGIFNIRQESYLVSSLSEITYRFYLINLKSDLVQWSASTGAVINQMVNTVLITVYEKLQLVIENDSQFICSLAVESELPIKLLKDRNELFTKFINELKKTSSFKISKRDKDTLLKYFT</sequence>